<proteinExistence type="inferred from homology"/>
<feature type="chain" id="PRO_1000198371" description="UPF0306 protein YPTS_0536">
    <location>
        <begin position="1"/>
        <end position="147"/>
    </location>
</feature>
<name>Y536_YERPB</name>
<protein>
    <recommendedName>
        <fullName evidence="1">UPF0306 protein YPTS_0536</fullName>
    </recommendedName>
</protein>
<organism>
    <name type="scientific">Yersinia pseudotuberculosis serotype IB (strain PB1/+)</name>
    <dbReference type="NCBI Taxonomy" id="502801"/>
    <lineage>
        <taxon>Bacteria</taxon>
        <taxon>Pseudomonadati</taxon>
        <taxon>Pseudomonadota</taxon>
        <taxon>Gammaproteobacteria</taxon>
        <taxon>Enterobacterales</taxon>
        <taxon>Yersiniaceae</taxon>
        <taxon>Yersinia</taxon>
    </lineage>
</organism>
<comment type="similarity">
    <text evidence="1">Belongs to the UPF0306 family.</text>
</comment>
<reference key="1">
    <citation type="submission" date="2008-04" db="EMBL/GenBank/DDBJ databases">
        <title>Complete sequence of Yersinia pseudotuberculosis PB1/+.</title>
        <authorList>
            <person name="Copeland A."/>
            <person name="Lucas S."/>
            <person name="Lapidus A."/>
            <person name="Glavina del Rio T."/>
            <person name="Dalin E."/>
            <person name="Tice H."/>
            <person name="Bruce D."/>
            <person name="Goodwin L."/>
            <person name="Pitluck S."/>
            <person name="Munk A.C."/>
            <person name="Brettin T."/>
            <person name="Detter J.C."/>
            <person name="Han C."/>
            <person name="Tapia R."/>
            <person name="Schmutz J."/>
            <person name="Larimer F."/>
            <person name="Land M."/>
            <person name="Hauser L."/>
            <person name="Challacombe J.F."/>
            <person name="Green L."/>
            <person name="Lindler L.E."/>
            <person name="Nikolich M.P."/>
            <person name="Richardson P."/>
        </authorList>
    </citation>
    <scope>NUCLEOTIDE SEQUENCE [LARGE SCALE GENOMIC DNA]</scope>
    <source>
        <strain>PB1/+</strain>
    </source>
</reference>
<accession>B2K2T1</accession>
<gene>
    <name type="ordered locus">YPTS_0536</name>
</gene>
<dbReference type="EMBL" id="CP001048">
    <property type="protein sequence ID" value="ACC87522.1"/>
    <property type="molecule type" value="Genomic_DNA"/>
</dbReference>
<dbReference type="RefSeq" id="WP_011191642.1">
    <property type="nucleotide sequence ID" value="NZ_CP009780.1"/>
</dbReference>
<dbReference type="SMR" id="B2K2T1"/>
<dbReference type="KEGG" id="ypb:YPTS_0536"/>
<dbReference type="PATRIC" id="fig|502801.10.peg.4211"/>
<dbReference type="Gene3D" id="2.30.110.10">
    <property type="entry name" value="Electron Transport, Fmn-binding Protein, Chain A"/>
    <property type="match status" value="1"/>
</dbReference>
<dbReference type="HAMAP" id="MF_00764">
    <property type="entry name" value="UPF0306"/>
    <property type="match status" value="1"/>
</dbReference>
<dbReference type="InterPro" id="IPR012349">
    <property type="entry name" value="Split_barrel_FMN-bd"/>
</dbReference>
<dbReference type="InterPro" id="IPR011194">
    <property type="entry name" value="UPF0306"/>
</dbReference>
<dbReference type="NCBIfam" id="NF002900">
    <property type="entry name" value="PRK03467.1"/>
    <property type="match status" value="1"/>
</dbReference>
<dbReference type="PIRSF" id="PIRSF009554">
    <property type="entry name" value="UCP009554"/>
    <property type="match status" value="1"/>
</dbReference>
<dbReference type="SUPFAM" id="SSF50475">
    <property type="entry name" value="FMN-binding split barrel"/>
    <property type="match status" value="1"/>
</dbReference>
<evidence type="ECO:0000255" key="1">
    <source>
        <dbReference type="HAMAP-Rule" id="MF_00764"/>
    </source>
</evidence>
<sequence>MNNPDDVLLINRFLRQQHVLTLCAGSGMDMWCASCFYVFDENQMALFLMTEKHTRHSELMLINPQVAGTVATQSRTIALIKGIQYRGDISLLSGDAEQAARNRYCRRFPVAKVSSAPLWQLNLLEIKMTNNALGFGKKLHWSRVEPL</sequence>